<dbReference type="EMBL" id="BC080841">
    <property type="protein sequence ID" value="AAH80841.1"/>
    <property type="molecule type" value="mRNA"/>
</dbReference>
<dbReference type="RefSeq" id="NP_001004649.1">
    <property type="nucleotide sequence ID" value="NM_001004649.1"/>
</dbReference>
<dbReference type="SMR" id="Q66JN8"/>
<dbReference type="FunCoup" id="Q66JN8">
    <property type="interactions" value="566"/>
</dbReference>
<dbReference type="STRING" id="7955.ENSDARP00000028805"/>
<dbReference type="PaxDb" id="7955-ENSDARP00000028805"/>
<dbReference type="DNASU" id="447911"/>
<dbReference type="GeneID" id="447911"/>
<dbReference type="KEGG" id="dre:447911"/>
<dbReference type="AGR" id="ZFIN:ZDB-GENE-040912-80"/>
<dbReference type="CTD" id="79363"/>
<dbReference type="ZFIN" id="ZDB-GENE-040912-80">
    <property type="gene designation" value="cplane2"/>
</dbReference>
<dbReference type="eggNOG" id="KOG0395">
    <property type="taxonomic scope" value="Eukaryota"/>
</dbReference>
<dbReference type="InParanoid" id="Q66JN8"/>
<dbReference type="OrthoDB" id="10266641at2759"/>
<dbReference type="PhylomeDB" id="Q66JN8"/>
<dbReference type="PRO" id="PR:Q66JN8"/>
<dbReference type="Proteomes" id="UP000000437">
    <property type="component" value="Chromosome 6"/>
</dbReference>
<dbReference type="GO" id="GO:0036064">
    <property type="term" value="C:ciliary basal body"/>
    <property type="evidence" value="ECO:0000250"/>
    <property type="project" value="UniProtKB"/>
</dbReference>
<dbReference type="GO" id="GO:0005737">
    <property type="term" value="C:cytoplasm"/>
    <property type="evidence" value="ECO:0007669"/>
    <property type="project" value="UniProtKB-KW"/>
</dbReference>
<dbReference type="GO" id="GO:0005525">
    <property type="term" value="F:GTP binding"/>
    <property type="evidence" value="ECO:0007669"/>
    <property type="project" value="UniProtKB-KW"/>
</dbReference>
<dbReference type="GO" id="GO:0003924">
    <property type="term" value="F:GTPase activity"/>
    <property type="evidence" value="ECO:0007669"/>
    <property type="project" value="InterPro"/>
</dbReference>
<dbReference type="GO" id="GO:0060271">
    <property type="term" value="P:cilium assembly"/>
    <property type="evidence" value="ECO:0000250"/>
    <property type="project" value="UniProtKB"/>
</dbReference>
<dbReference type="GO" id="GO:0006887">
    <property type="term" value="P:exocytosis"/>
    <property type="evidence" value="ECO:0007669"/>
    <property type="project" value="UniProtKB-KW"/>
</dbReference>
<dbReference type="GO" id="GO:0008104">
    <property type="term" value="P:protein localization"/>
    <property type="evidence" value="ECO:0000250"/>
    <property type="project" value="UniProtKB"/>
</dbReference>
<dbReference type="GO" id="GO:0015031">
    <property type="term" value="P:protein transport"/>
    <property type="evidence" value="ECO:0007669"/>
    <property type="project" value="UniProtKB-KW"/>
</dbReference>
<dbReference type="GO" id="GO:0017157">
    <property type="term" value="P:regulation of exocytosis"/>
    <property type="evidence" value="ECO:0000250"/>
    <property type="project" value="UniProtKB"/>
</dbReference>
<dbReference type="GO" id="GO:0031338">
    <property type="term" value="P:regulation of vesicle fusion"/>
    <property type="evidence" value="ECO:0000250"/>
    <property type="project" value="UniProtKB"/>
</dbReference>
<dbReference type="FunFam" id="3.40.50.300:FF:001043">
    <property type="entry name" value="ciliogenesis and planar polarity effector 2"/>
    <property type="match status" value="1"/>
</dbReference>
<dbReference type="Gene3D" id="3.40.50.300">
    <property type="entry name" value="P-loop containing nucleotide triphosphate hydrolases"/>
    <property type="match status" value="1"/>
</dbReference>
<dbReference type="InterPro" id="IPR027417">
    <property type="entry name" value="P-loop_NTPase"/>
</dbReference>
<dbReference type="InterPro" id="IPR039677">
    <property type="entry name" value="RSG1"/>
</dbReference>
<dbReference type="InterPro" id="IPR001806">
    <property type="entry name" value="Small_GTPase"/>
</dbReference>
<dbReference type="PANTHER" id="PTHR14983">
    <property type="entry name" value="CILIOGENESIS AND PLANAR POLARITY EFFECTOR 2"/>
    <property type="match status" value="1"/>
</dbReference>
<dbReference type="PANTHER" id="PTHR14983:SF1">
    <property type="entry name" value="CILIOGENESIS AND PLANAR POLARITY EFFECTOR 2"/>
    <property type="match status" value="1"/>
</dbReference>
<dbReference type="Pfam" id="PF00071">
    <property type="entry name" value="Ras"/>
    <property type="match status" value="1"/>
</dbReference>
<dbReference type="PRINTS" id="PR00449">
    <property type="entry name" value="RASTRNSFRMNG"/>
</dbReference>
<dbReference type="SMART" id="SM00175">
    <property type="entry name" value="RAB"/>
    <property type="match status" value="1"/>
</dbReference>
<dbReference type="SUPFAM" id="SSF52540">
    <property type="entry name" value="P-loop containing nucleoside triphosphate hydrolases"/>
    <property type="match status" value="1"/>
</dbReference>
<dbReference type="PROSITE" id="PS51419">
    <property type="entry name" value="RAB"/>
    <property type="match status" value="1"/>
</dbReference>
<feature type="chain" id="PRO_0000284540" description="Ciliogenesis and planar polarity effector 2">
    <location>
        <begin position="1"/>
        <end position="252"/>
    </location>
</feature>
<feature type="region of interest" description="Small GTPase-like">
    <location>
        <begin position="46"/>
        <end position="252"/>
    </location>
</feature>
<feature type="binding site" evidence="1">
    <location>
        <begin position="62"/>
        <end position="67"/>
    </location>
    <ligand>
        <name>GTP</name>
        <dbReference type="ChEBI" id="CHEBI:37565"/>
    </ligand>
</feature>
<feature type="binding site" evidence="1">
    <location>
        <begin position="173"/>
        <end position="176"/>
    </location>
    <ligand>
        <name>GTP</name>
        <dbReference type="ChEBI" id="CHEBI:37565"/>
    </ligand>
</feature>
<organism>
    <name type="scientific">Danio rerio</name>
    <name type="common">Zebrafish</name>
    <name type="synonym">Brachydanio rerio</name>
    <dbReference type="NCBI Taxonomy" id="7955"/>
    <lineage>
        <taxon>Eukaryota</taxon>
        <taxon>Metazoa</taxon>
        <taxon>Chordata</taxon>
        <taxon>Craniata</taxon>
        <taxon>Vertebrata</taxon>
        <taxon>Euteleostomi</taxon>
        <taxon>Actinopterygii</taxon>
        <taxon>Neopterygii</taxon>
        <taxon>Teleostei</taxon>
        <taxon>Ostariophysi</taxon>
        <taxon>Cypriniformes</taxon>
        <taxon>Danionidae</taxon>
        <taxon>Danioninae</taxon>
        <taxon>Danio</taxon>
    </lineage>
</organism>
<sequence>MSVPPGSIIVSDWHRCPDSREFFSKILHKKRRRKFGLLEAPMMPPQMNVDLVRYKVFLSGKTGVGKSALAARLAGLDLPKMHYETTGIETTVVFWPVRLKESGRVLFFRFELWDCGESAMRRFDHMLLSCKEKVDAILFLFSFTDRGSFDDLTNQISRITEPSDRVVKLVVGTKFDLFMHTDVTESDVTHFQEVWGLPVFRVGGDVSAGLGEVAPLLNALAENLWHQDCMAASSVSISPQAALRETSSEIIV</sequence>
<proteinExistence type="evidence at transcript level"/>
<protein>
    <recommendedName>
        <fullName evidence="4">Ciliogenesis and planar polarity effector 2</fullName>
    </recommendedName>
    <alternativeName>
        <fullName evidence="2">REM2- and Rab-like small GTPase 1</fullName>
    </alternativeName>
</protein>
<accession>Q66JN8</accession>
<keyword id="KW-0966">Cell projection</keyword>
<keyword id="KW-0969">Cilium</keyword>
<keyword id="KW-0970">Cilium biogenesis/degradation</keyword>
<keyword id="KW-0963">Cytoplasm</keyword>
<keyword id="KW-0206">Cytoskeleton</keyword>
<keyword id="KW-0268">Exocytosis</keyword>
<keyword id="KW-0342">GTP-binding</keyword>
<keyword id="KW-0547">Nucleotide-binding</keyword>
<keyword id="KW-0653">Protein transport</keyword>
<keyword id="KW-1185">Reference proteome</keyword>
<keyword id="KW-0813">Transport</keyword>
<evidence type="ECO:0000250" key="1"/>
<evidence type="ECO:0000250" key="2">
    <source>
        <dbReference type="UniProtKB" id="A2A825"/>
    </source>
</evidence>
<evidence type="ECO:0000250" key="3">
    <source>
        <dbReference type="UniProtKB" id="Q6GNL4"/>
    </source>
</evidence>
<evidence type="ECO:0000305" key="4"/>
<name>CPLN2_DANRE</name>
<comment type="function">
    <text evidence="3">Potential effector of the planar cell polarity signaling pathway. Plays a role in targeted membrane trafficking most probably at the level of vesicle fusion with membranes. Involved in cilium biogenesis by regulating the transport of cargo proteins to the basal body and to the apical tips of cilia. More generally involved in exocytosis in secretory cells (By similarity).</text>
</comment>
<comment type="subcellular location">
    <subcellularLocation>
        <location evidence="3">Cytoplasm</location>
        <location evidence="3">Cytoskeleton</location>
        <location evidence="3">Cilium basal body</location>
    </subcellularLocation>
</comment>
<comment type="similarity">
    <text evidence="4">Belongs to the small GTPase superfamily. Rab family.</text>
</comment>
<reference key="1">
    <citation type="submission" date="2004-08" db="EMBL/GenBank/DDBJ databases">
        <authorList>
            <consortium name="NIH - Zebrafish Gene Collection (ZGC) project"/>
        </authorList>
    </citation>
    <scope>NUCLEOTIDE SEQUENCE [LARGE SCALE MRNA]</scope>
    <source>
        <tissue>Embryo</tissue>
    </source>
</reference>
<gene>
    <name type="primary">cplane2</name>
    <name type="synonym">rsg1</name>
    <name type="ORF">zgc:101035</name>
</gene>